<gene>
    <name evidence="1" type="primary">rpoA</name>
    <name type="ordered locus">BH10270</name>
</gene>
<reference key="1">
    <citation type="submission" date="2000-07" db="EMBL/GenBank/DDBJ databases">
        <title>Bartonella henselae rpoA.</title>
        <authorList>
            <person name="Schmiederer M.W."/>
            <person name="Anderson B.E."/>
        </authorList>
    </citation>
    <scope>NUCLEOTIDE SEQUENCE [GENOMIC DNA]</scope>
</reference>
<reference key="2">
    <citation type="journal article" date="2004" name="Proc. Natl. Acad. Sci. U.S.A.">
        <title>The louse-borne human pathogen Bartonella quintana is a genomic derivative of the zoonotic agent Bartonella henselae.</title>
        <authorList>
            <person name="Alsmark U.C.M."/>
            <person name="Frank A.C."/>
            <person name="Karlberg E.O."/>
            <person name="Legault B.-A."/>
            <person name="Ardell D.H."/>
            <person name="Canbaeck B."/>
            <person name="Eriksson A.-S."/>
            <person name="Naeslund A.K."/>
            <person name="Handley S.A."/>
            <person name="Huvet M."/>
            <person name="La Scola B."/>
            <person name="Holmberg M."/>
            <person name="Andersson S.G.E."/>
        </authorList>
    </citation>
    <scope>NUCLEOTIDE SEQUENCE [LARGE SCALE GENOMIC DNA]</scope>
    <source>
        <strain>ATCC 49882 / DSM 28221 / CCUG 30454 / Houston 1</strain>
    </source>
</reference>
<sequence length="337" mass="37672">MIQKNWQELIKPNKVEFSKHDNPNISSVIVEPLERGFGLTLGNALRRVLLSSLRGAAITAVQIDGVLHEFSSIPGVREDVTDIILNIKEIALRMREEGPKRIVVCKEGPGVLRAGDISTVGDMEILNPDHVICTLDEDAEIRMEFIVNTGKGYVPSDRNCIDDARIGLIPVDSLYSPIRKVSYKVENTREGQVLDYDKLTLTVETNGAVNGEDALAFAARILQDQLALFINFKEPEKPTVEESNSELAFNPALLKKVDELELSVRSANCLKNDNIVYIGDLIQKTESEMLRTPNFGRKSLNEIKEVLACMGLHLGMEVPTWPPENIDDLAKRYEDQY</sequence>
<proteinExistence type="inferred from homology"/>
<comment type="function">
    <text evidence="1">DNA-dependent RNA polymerase catalyzes the transcription of DNA into RNA using the four ribonucleoside triphosphates as substrates.</text>
</comment>
<comment type="catalytic activity">
    <reaction evidence="1">
        <text>RNA(n) + a ribonucleoside 5'-triphosphate = RNA(n+1) + diphosphate</text>
        <dbReference type="Rhea" id="RHEA:21248"/>
        <dbReference type="Rhea" id="RHEA-COMP:14527"/>
        <dbReference type="Rhea" id="RHEA-COMP:17342"/>
        <dbReference type="ChEBI" id="CHEBI:33019"/>
        <dbReference type="ChEBI" id="CHEBI:61557"/>
        <dbReference type="ChEBI" id="CHEBI:140395"/>
        <dbReference type="EC" id="2.7.7.6"/>
    </reaction>
</comment>
<comment type="subunit">
    <text evidence="1">Homodimer. The RNAP catalytic core consists of 2 alpha, 1 beta, 1 beta' and 1 omega subunit. When a sigma factor is associated with the core the holoenzyme is formed, which can initiate transcription.</text>
</comment>
<comment type="domain">
    <text evidence="1">The N-terminal domain is essential for RNAP assembly and basal transcription, whereas the C-terminal domain is involved in interaction with transcriptional regulators and with upstream promoter elements.</text>
</comment>
<comment type="similarity">
    <text evidence="1">Belongs to the RNA polymerase alpha chain family.</text>
</comment>
<organism>
    <name type="scientific">Bartonella henselae (strain ATCC 49882 / DSM 28221 / CCUG 30454 / Houston 1)</name>
    <name type="common">Rochalimaea henselae</name>
    <dbReference type="NCBI Taxonomy" id="283166"/>
    <lineage>
        <taxon>Bacteria</taxon>
        <taxon>Pseudomonadati</taxon>
        <taxon>Pseudomonadota</taxon>
        <taxon>Alphaproteobacteria</taxon>
        <taxon>Hyphomicrobiales</taxon>
        <taxon>Bartonellaceae</taxon>
        <taxon>Bartonella</taxon>
    </lineage>
</organism>
<evidence type="ECO:0000255" key="1">
    <source>
        <dbReference type="HAMAP-Rule" id="MF_00059"/>
    </source>
</evidence>
<evidence type="ECO:0000305" key="2"/>
<accession>Q9FDC7</accession>
<accession>Q6G2Y9</accession>
<dbReference type="EC" id="2.7.7.6" evidence="1"/>
<dbReference type="EMBL" id="AF285111">
    <property type="protein sequence ID" value="AAG00506.1"/>
    <property type="molecule type" value="Genomic_DNA"/>
</dbReference>
<dbReference type="EMBL" id="BX897699">
    <property type="protein sequence ID" value="CAF27818.1"/>
    <property type="molecule type" value="Genomic_DNA"/>
</dbReference>
<dbReference type="RefSeq" id="WP_011180891.1">
    <property type="nucleotide sequence ID" value="NZ_LRIJ02000001.1"/>
</dbReference>
<dbReference type="SMR" id="Q9FDC7"/>
<dbReference type="PaxDb" id="283166-BH10270"/>
<dbReference type="EnsemblBacteria" id="CAF27818">
    <property type="protein sequence ID" value="CAF27818"/>
    <property type="gene ID" value="BH10270"/>
</dbReference>
<dbReference type="KEGG" id="bhe:BH10270"/>
<dbReference type="eggNOG" id="COG0202">
    <property type="taxonomic scope" value="Bacteria"/>
</dbReference>
<dbReference type="OrthoDB" id="9805706at2"/>
<dbReference type="Proteomes" id="UP000000421">
    <property type="component" value="Chromosome"/>
</dbReference>
<dbReference type="GO" id="GO:0005737">
    <property type="term" value="C:cytoplasm"/>
    <property type="evidence" value="ECO:0007669"/>
    <property type="project" value="UniProtKB-ARBA"/>
</dbReference>
<dbReference type="GO" id="GO:0000428">
    <property type="term" value="C:DNA-directed RNA polymerase complex"/>
    <property type="evidence" value="ECO:0007669"/>
    <property type="project" value="UniProtKB-KW"/>
</dbReference>
<dbReference type="GO" id="GO:0003677">
    <property type="term" value="F:DNA binding"/>
    <property type="evidence" value="ECO:0007669"/>
    <property type="project" value="UniProtKB-UniRule"/>
</dbReference>
<dbReference type="GO" id="GO:0003899">
    <property type="term" value="F:DNA-directed RNA polymerase activity"/>
    <property type="evidence" value="ECO:0007669"/>
    <property type="project" value="UniProtKB-UniRule"/>
</dbReference>
<dbReference type="GO" id="GO:0046983">
    <property type="term" value="F:protein dimerization activity"/>
    <property type="evidence" value="ECO:0007669"/>
    <property type="project" value="InterPro"/>
</dbReference>
<dbReference type="GO" id="GO:0006351">
    <property type="term" value="P:DNA-templated transcription"/>
    <property type="evidence" value="ECO:0007669"/>
    <property type="project" value="UniProtKB-UniRule"/>
</dbReference>
<dbReference type="CDD" id="cd06928">
    <property type="entry name" value="RNAP_alpha_NTD"/>
    <property type="match status" value="1"/>
</dbReference>
<dbReference type="FunFam" id="1.10.150.20:FF:000001">
    <property type="entry name" value="DNA-directed RNA polymerase subunit alpha"/>
    <property type="match status" value="1"/>
</dbReference>
<dbReference type="FunFam" id="2.170.120.12:FF:000001">
    <property type="entry name" value="DNA-directed RNA polymerase subunit alpha"/>
    <property type="match status" value="1"/>
</dbReference>
<dbReference type="Gene3D" id="1.10.150.20">
    <property type="entry name" value="5' to 3' exonuclease, C-terminal subdomain"/>
    <property type="match status" value="1"/>
</dbReference>
<dbReference type="Gene3D" id="2.170.120.12">
    <property type="entry name" value="DNA-directed RNA polymerase, insert domain"/>
    <property type="match status" value="1"/>
</dbReference>
<dbReference type="Gene3D" id="3.30.1360.10">
    <property type="entry name" value="RNA polymerase, RBP11-like subunit"/>
    <property type="match status" value="1"/>
</dbReference>
<dbReference type="HAMAP" id="MF_00059">
    <property type="entry name" value="RNApol_bact_RpoA"/>
    <property type="match status" value="1"/>
</dbReference>
<dbReference type="InterPro" id="IPR011262">
    <property type="entry name" value="DNA-dir_RNA_pol_insert"/>
</dbReference>
<dbReference type="InterPro" id="IPR011263">
    <property type="entry name" value="DNA-dir_RNA_pol_RpoA/D/Rpb3"/>
</dbReference>
<dbReference type="InterPro" id="IPR011773">
    <property type="entry name" value="DNA-dir_RpoA"/>
</dbReference>
<dbReference type="InterPro" id="IPR036603">
    <property type="entry name" value="RBP11-like"/>
</dbReference>
<dbReference type="InterPro" id="IPR011260">
    <property type="entry name" value="RNAP_asu_C"/>
</dbReference>
<dbReference type="InterPro" id="IPR036643">
    <property type="entry name" value="RNApol_insert_sf"/>
</dbReference>
<dbReference type="NCBIfam" id="NF003513">
    <property type="entry name" value="PRK05182.1-2"/>
    <property type="match status" value="1"/>
</dbReference>
<dbReference type="NCBIfam" id="NF003519">
    <property type="entry name" value="PRK05182.2-5"/>
    <property type="match status" value="1"/>
</dbReference>
<dbReference type="NCBIfam" id="TIGR02027">
    <property type="entry name" value="rpoA"/>
    <property type="match status" value="1"/>
</dbReference>
<dbReference type="Pfam" id="PF01000">
    <property type="entry name" value="RNA_pol_A_bac"/>
    <property type="match status" value="1"/>
</dbReference>
<dbReference type="Pfam" id="PF03118">
    <property type="entry name" value="RNA_pol_A_CTD"/>
    <property type="match status" value="1"/>
</dbReference>
<dbReference type="Pfam" id="PF01193">
    <property type="entry name" value="RNA_pol_L"/>
    <property type="match status" value="1"/>
</dbReference>
<dbReference type="SMART" id="SM00662">
    <property type="entry name" value="RPOLD"/>
    <property type="match status" value="1"/>
</dbReference>
<dbReference type="SUPFAM" id="SSF47789">
    <property type="entry name" value="C-terminal domain of RNA polymerase alpha subunit"/>
    <property type="match status" value="1"/>
</dbReference>
<dbReference type="SUPFAM" id="SSF56553">
    <property type="entry name" value="Insert subdomain of RNA polymerase alpha subunit"/>
    <property type="match status" value="1"/>
</dbReference>
<dbReference type="SUPFAM" id="SSF55257">
    <property type="entry name" value="RBP11-like subunits of RNA polymerase"/>
    <property type="match status" value="1"/>
</dbReference>
<keyword id="KW-0240">DNA-directed RNA polymerase</keyword>
<keyword id="KW-0548">Nucleotidyltransferase</keyword>
<keyword id="KW-0804">Transcription</keyword>
<keyword id="KW-0808">Transferase</keyword>
<feature type="chain" id="PRO_0000175267" description="DNA-directed RNA polymerase subunit alpha">
    <location>
        <begin position="1"/>
        <end position="337"/>
    </location>
</feature>
<feature type="region of interest" description="Alpha N-terminal domain (alpha-NTD)" evidence="1">
    <location>
        <begin position="1"/>
        <end position="233"/>
    </location>
</feature>
<feature type="region of interest" description="Alpha C-terminal domain (alpha-CTD)" evidence="1">
    <location>
        <begin position="249"/>
        <end position="337"/>
    </location>
</feature>
<feature type="sequence conflict" description="In Ref. 1; AAG00506." evidence="2" ref="1">
    <original>K</original>
    <variation>N</variation>
    <location>
        <position position="11"/>
    </location>
</feature>
<feature type="sequence conflict" description="In Ref. 1; AAG00506." evidence="2" ref="1">
    <original>S</original>
    <variation>Y</variation>
    <location>
        <position position="52"/>
    </location>
</feature>
<protein>
    <recommendedName>
        <fullName evidence="1">DNA-directed RNA polymerase subunit alpha</fullName>
        <shortName evidence="1">RNAP subunit alpha</shortName>
        <ecNumber evidence="1">2.7.7.6</ecNumber>
    </recommendedName>
    <alternativeName>
        <fullName evidence="1">RNA polymerase subunit alpha</fullName>
    </alternativeName>
    <alternativeName>
        <fullName evidence="1">Transcriptase subunit alpha</fullName>
    </alternativeName>
</protein>
<name>RPOA_BARHE</name>